<feature type="chain" id="PRO_1000149089" description="Histidinol-phosphate aminotransferase">
    <location>
        <begin position="1"/>
        <end position="351"/>
    </location>
</feature>
<feature type="modified residue" description="N6-(pyridoxal phosphate)lysine" evidence="1">
    <location>
        <position position="213"/>
    </location>
</feature>
<proteinExistence type="inferred from homology"/>
<sequence>MIEKLFKQNLQKFVPYTVPKLDYEIKLDANESFLKLDDYMMGKILNKIKDVEFNRYPDAGAEKVCRAYSKYVGINRENIMAGNGSDELIQIIIAALVDKNENIMTVEPDFSMYGNYSEIGGGKALIFQLDEEFNLDVDKLIESANVEKVKVLFLSNPNNPTGKVLKREQIFKILNGCDCAVVIDEAYVEFHEESIVDSIYEYENLIVLRTCSKAMASAAIRLGFLITNSFMLNEIKKAKPPFNVSSVTQAIGEAVLEETEYIKKSLENIKNERSFLIDKLSAFKEIKLYPTCANFILIKFKDAEFVYKYLLENKIVVRNYKQGRLKDFLRITVGSREENEAVINNLSKILK</sequence>
<comment type="catalytic activity">
    <reaction evidence="1">
        <text>L-histidinol phosphate + 2-oxoglutarate = 3-(imidazol-4-yl)-2-oxopropyl phosphate + L-glutamate</text>
        <dbReference type="Rhea" id="RHEA:23744"/>
        <dbReference type="ChEBI" id="CHEBI:16810"/>
        <dbReference type="ChEBI" id="CHEBI:29985"/>
        <dbReference type="ChEBI" id="CHEBI:57766"/>
        <dbReference type="ChEBI" id="CHEBI:57980"/>
        <dbReference type="EC" id="2.6.1.9"/>
    </reaction>
</comment>
<comment type="cofactor">
    <cofactor evidence="1">
        <name>pyridoxal 5'-phosphate</name>
        <dbReference type="ChEBI" id="CHEBI:597326"/>
    </cofactor>
</comment>
<comment type="pathway">
    <text evidence="1">Amino-acid biosynthesis; L-histidine biosynthesis; L-histidine from 5-phospho-alpha-D-ribose 1-diphosphate: step 7/9.</text>
</comment>
<comment type="subunit">
    <text evidence="1">Homodimer.</text>
</comment>
<comment type="similarity">
    <text evidence="1">Belongs to the class-II pyridoxal-phosphate-dependent aminotransferase family. Histidinol-phosphate aminotransferase subfamily.</text>
</comment>
<protein>
    <recommendedName>
        <fullName evidence="1">Histidinol-phosphate aminotransferase</fullName>
        <ecNumber evidence="1">2.6.1.9</ecNumber>
    </recommendedName>
    <alternativeName>
        <fullName evidence="1">Imidazole acetol-phosphate transaminase</fullName>
    </alternativeName>
</protein>
<dbReference type="EC" id="2.6.1.9" evidence="1"/>
<dbReference type="EMBL" id="AP009049">
    <property type="protein sequence ID" value="BAH06243.1"/>
    <property type="molecule type" value="Genomic_DNA"/>
</dbReference>
<dbReference type="RefSeq" id="WP_012101683.1">
    <property type="nucleotide sequence ID" value="NC_011837.1"/>
</dbReference>
<dbReference type="SMR" id="B9E168"/>
<dbReference type="KEGG" id="ckr:CKR_1192"/>
<dbReference type="HOGENOM" id="CLU_017584_3_1_9"/>
<dbReference type="UniPathway" id="UPA00031">
    <property type="reaction ID" value="UER00012"/>
</dbReference>
<dbReference type="Proteomes" id="UP000007969">
    <property type="component" value="Chromosome"/>
</dbReference>
<dbReference type="GO" id="GO:0004400">
    <property type="term" value="F:histidinol-phosphate transaminase activity"/>
    <property type="evidence" value="ECO:0007669"/>
    <property type="project" value="UniProtKB-UniRule"/>
</dbReference>
<dbReference type="GO" id="GO:0030170">
    <property type="term" value="F:pyridoxal phosphate binding"/>
    <property type="evidence" value="ECO:0007669"/>
    <property type="project" value="InterPro"/>
</dbReference>
<dbReference type="GO" id="GO:0000105">
    <property type="term" value="P:L-histidine biosynthetic process"/>
    <property type="evidence" value="ECO:0007669"/>
    <property type="project" value="UniProtKB-UniRule"/>
</dbReference>
<dbReference type="CDD" id="cd00609">
    <property type="entry name" value="AAT_like"/>
    <property type="match status" value="1"/>
</dbReference>
<dbReference type="Gene3D" id="3.90.1150.10">
    <property type="entry name" value="Aspartate Aminotransferase, domain 1"/>
    <property type="match status" value="1"/>
</dbReference>
<dbReference type="Gene3D" id="3.40.640.10">
    <property type="entry name" value="Type I PLP-dependent aspartate aminotransferase-like (Major domain)"/>
    <property type="match status" value="1"/>
</dbReference>
<dbReference type="HAMAP" id="MF_01023">
    <property type="entry name" value="HisC_aminotrans_2"/>
    <property type="match status" value="1"/>
</dbReference>
<dbReference type="InterPro" id="IPR004839">
    <property type="entry name" value="Aminotransferase_I/II_large"/>
</dbReference>
<dbReference type="InterPro" id="IPR005861">
    <property type="entry name" value="HisP_aminotrans"/>
</dbReference>
<dbReference type="InterPro" id="IPR015424">
    <property type="entry name" value="PyrdxlP-dep_Trfase"/>
</dbReference>
<dbReference type="InterPro" id="IPR015421">
    <property type="entry name" value="PyrdxlP-dep_Trfase_major"/>
</dbReference>
<dbReference type="InterPro" id="IPR015422">
    <property type="entry name" value="PyrdxlP-dep_Trfase_small"/>
</dbReference>
<dbReference type="NCBIfam" id="TIGR01141">
    <property type="entry name" value="hisC"/>
    <property type="match status" value="1"/>
</dbReference>
<dbReference type="PANTHER" id="PTHR42885:SF2">
    <property type="entry name" value="HISTIDINOL-PHOSPHATE AMINOTRANSFERASE"/>
    <property type="match status" value="1"/>
</dbReference>
<dbReference type="PANTHER" id="PTHR42885">
    <property type="entry name" value="HISTIDINOL-PHOSPHATE AMINOTRANSFERASE-RELATED"/>
    <property type="match status" value="1"/>
</dbReference>
<dbReference type="Pfam" id="PF00155">
    <property type="entry name" value="Aminotran_1_2"/>
    <property type="match status" value="1"/>
</dbReference>
<dbReference type="SUPFAM" id="SSF53383">
    <property type="entry name" value="PLP-dependent transferases"/>
    <property type="match status" value="1"/>
</dbReference>
<accession>B9E168</accession>
<organism>
    <name type="scientific">Clostridium kluyveri (strain NBRC 12016)</name>
    <dbReference type="NCBI Taxonomy" id="583346"/>
    <lineage>
        <taxon>Bacteria</taxon>
        <taxon>Bacillati</taxon>
        <taxon>Bacillota</taxon>
        <taxon>Clostridia</taxon>
        <taxon>Eubacteriales</taxon>
        <taxon>Clostridiaceae</taxon>
        <taxon>Clostridium</taxon>
    </lineage>
</organism>
<name>HIS8_CLOK1</name>
<reference key="1">
    <citation type="submission" date="2005-09" db="EMBL/GenBank/DDBJ databases">
        <title>Complete genome sequence of Clostridium kluyveri and comparative genomics of Clostridia species.</title>
        <authorList>
            <person name="Inui M."/>
            <person name="Nonaka H."/>
            <person name="Shinoda Y."/>
            <person name="Ikenaga Y."/>
            <person name="Abe M."/>
            <person name="Naito K."/>
            <person name="Vertes A.A."/>
            <person name="Yukawa H."/>
        </authorList>
    </citation>
    <scope>NUCLEOTIDE SEQUENCE [LARGE SCALE GENOMIC DNA]</scope>
    <source>
        <strain>NBRC 12016</strain>
    </source>
</reference>
<keyword id="KW-0028">Amino-acid biosynthesis</keyword>
<keyword id="KW-0032">Aminotransferase</keyword>
<keyword id="KW-0368">Histidine biosynthesis</keyword>
<keyword id="KW-0663">Pyridoxal phosphate</keyword>
<keyword id="KW-0808">Transferase</keyword>
<evidence type="ECO:0000255" key="1">
    <source>
        <dbReference type="HAMAP-Rule" id="MF_01023"/>
    </source>
</evidence>
<gene>
    <name evidence="1" type="primary">hisC</name>
    <name type="ordered locus">CKR_1192</name>
</gene>